<proteinExistence type="inferred from homology"/>
<gene>
    <name type="primary">mt-cyb</name>
    <name type="synonym">cob</name>
    <name type="synonym">cytb</name>
    <name type="synonym">mtcyb</name>
</gene>
<name>CYB_ISUOX</name>
<keyword id="KW-0249">Electron transport</keyword>
<keyword id="KW-0349">Heme</keyword>
<keyword id="KW-0408">Iron</keyword>
<keyword id="KW-0472">Membrane</keyword>
<keyword id="KW-0479">Metal-binding</keyword>
<keyword id="KW-0496">Mitochondrion</keyword>
<keyword id="KW-0999">Mitochondrion inner membrane</keyword>
<keyword id="KW-0679">Respiratory chain</keyword>
<keyword id="KW-0812">Transmembrane</keyword>
<keyword id="KW-1133">Transmembrane helix</keyword>
<keyword id="KW-0813">Transport</keyword>
<keyword id="KW-0830">Ubiquinone</keyword>
<comment type="function">
    <text evidence="2">Component of the ubiquinol-cytochrome c reductase complex (complex III or cytochrome b-c1 complex) that is part of the mitochondrial respiratory chain. The b-c1 complex mediates electron transfer from ubiquinol to cytochrome c. Contributes to the generation of a proton gradient across the mitochondrial membrane that is then used for ATP synthesis.</text>
</comment>
<comment type="cofactor">
    <cofactor evidence="2">
        <name>heme b</name>
        <dbReference type="ChEBI" id="CHEBI:60344"/>
    </cofactor>
    <text evidence="2">Binds 2 heme b groups non-covalently.</text>
</comment>
<comment type="subunit">
    <text evidence="2">The cytochrome bc1 complex contains 3 respiratory subunits (MT-CYB, CYC1 and UQCRFS1), 2 core proteins (UQCRC1 and UQCRC2) and probably 6 low-molecular weight proteins.</text>
</comment>
<comment type="subcellular location">
    <subcellularLocation>
        <location evidence="2">Mitochondrion inner membrane</location>
        <topology evidence="2">Multi-pass membrane protein</topology>
    </subcellularLocation>
</comment>
<comment type="miscellaneous">
    <text evidence="1">Heme 1 (or BL or b562) is low-potential and absorbs at about 562 nm, and heme 2 (or BH or b566) is high-potential and absorbs at about 566 nm.</text>
</comment>
<comment type="similarity">
    <text evidence="3 4">Belongs to the cytochrome b family.</text>
</comment>
<comment type="caution">
    <text evidence="2">The full-length protein contains only eight transmembrane helices, not nine as predicted by bioinformatics tools.</text>
</comment>
<reference key="1">
    <citation type="journal article" date="1992" name="Nature">
        <title>Rates of mitochondrial DNA evolution in sharks are slow compared with mammals.</title>
        <authorList>
            <person name="Martin A.P."/>
            <person name="Naylor G.J.P."/>
            <person name="Palumbi S.R."/>
        </authorList>
    </citation>
    <scope>NUCLEOTIDE SEQUENCE [GENOMIC DNA]</scope>
</reference>
<protein>
    <recommendedName>
        <fullName>Cytochrome b</fullName>
    </recommendedName>
    <alternativeName>
        <fullName>Complex III subunit 3</fullName>
    </alternativeName>
    <alternativeName>
        <fullName>Complex III subunit III</fullName>
    </alternativeName>
    <alternativeName>
        <fullName>Cytochrome b-c1 complex subunit 3</fullName>
    </alternativeName>
    <alternativeName>
        <fullName>Ubiquinol-cytochrome-c reductase complex cytochrome b subunit</fullName>
    </alternativeName>
</protein>
<dbReference type="EMBL" id="L08036">
    <property type="protein sequence ID" value="AAA31865.1"/>
    <property type="molecule type" value="Genomic_DNA"/>
</dbReference>
<dbReference type="SMR" id="P34870"/>
<dbReference type="GO" id="GO:0005743">
    <property type="term" value="C:mitochondrial inner membrane"/>
    <property type="evidence" value="ECO:0007669"/>
    <property type="project" value="UniProtKB-SubCell"/>
</dbReference>
<dbReference type="GO" id="GO:0045275">
    <property type="term" value="C:respiratory chain complex III"/>
    <property type="evidence" value="ECO:0007669"/>
    <property type="project" value="InterPro"/>
</dbReference>
<dbReference type="GO" id="GO:0046872">
    <property type="term" value="F:metal ion binding"/>
    <property type="evidence" value="ECO:0007669"/>
    <property type="project" value="UniProtKB-KW"/>
</dbReference>
<dbReference type="GO" id="GO:0008121">
    <property type="term" value="F:ubiquinol-cytochrome-c reductase activity"/>
    <property type="evidence" value="ECO:0007669"/>
    <property type="project" value="InterPro"/>
</dbReference>
<dbReference type="GO" id="GO:0006122">
    <property type="term" value="P:mitochondrial electron transport, ubiquinol to cytochrome c"/>
    <property type="evidence" value="ECO:0007669"/>
    <property type="project" value="TreeGrafter"/>
</dbReference>
<dbReference type="CDD" id="cd00290">
    <property type="entry name" value="cytochrome_b_C"/>
    <property type="match status" value="1"/>
</dbReference>
<dbReference type="CDD" id="cd00284">
    <property type="entry name" value="Cytochrome_b_N"/>
    <property type="match status" value="1"/>
</dbReference>
<dbReference type="FunFam" id="1.20.810.10:FF:000002">
    <property type="entry name" value="Cytochrome b"/>
    <property type="match status" value="1"/>
</dbReference>
<dbReference type="Gene3D" id="1.20.810.10">
    <property type="entry name" value="Cytochrome Bc1 Complex, Chain C"/>
    <property type="match status" value="1"/>
</dbReference>
<dbReference type="InterPro" id="IPR005798">
    <property type="entry name" value="Cyt_b/b6_C"/>
</dbReference>
<dbReference type="InterPro" id="IPR036150">
    <property type="entry name" value="Cyt_b/b6_C_sf"/>
</dbReference>
<dbReference type="InterPro" id="IPR005797">
    <property type="entry name" value="Cyt_b/b6_N"/>
</dbReference>
<dbReference type="InterPro" id="IPR027387">
    <property type="entry name" value="Cytb/b6-like_sf"/>
</dbReference>
<dbReference type="InterPro" id="IPR030689">
    <property type="entry name" value="Cytochrome_b"/>
</dbReference>
<dbReference type="InterPro" id="IPR048260">
    <property type="entry name" value="Cytochrome_b_C_euk/bac"/>
</dbReference>
<dbReference type="InterPro" id="IPR048259">
    <property type="entry name" value="Cytochrome_b_N_euk/bac"/>
</dbReference>
<dbReference type="InterPro" id="IPR016174">
    <property type="entry name" value="Di-haem_cyt_TM"/>
</dbReference>
<dbReference type="PANTHER" id="PTHR19271">
    <property type="entry name" value="CYTOCHROME B"/>
    <property type="match status" value="1"/>
</dbReference>
<dbReference type="PANTHER" id="PTHR19271:SF16">
    <property type="entry name" value="CYTOCHROME B"/>
    <property type="match status" value="1"/>
</dbReference>
<dbReference type="Pfam" id="PF00032">
    <property type="entry name" value="Cytochrom_B_C"/>
    <property type="match status" value="1"/>
</dbReference>
<dbReference type="Pfam" id="PF00033">
    <property type="entry name" value="Cytochrome_B"/>
    <property type="match status" value="1"/>
</dbReference>
<dbReference type="PIRSF" id="PIRSF038885">
    <property type="entry name" value="COB"/>
    <property type="match status" value="1"/>
</dbReference>
<dbReference type="SUPFAM" id="SSF81648">
    <property type="entry name" value="a domain/subunit of cytochrome bc1 complex (Ubiquinol-cytochrome c reductase)"/>
    <property type="match status" value="1"/>
</dbReference>
<dbReference type="SUPFAM" id="SSF81342">
    <property type="entry name" value="Transmembrane di-heme cytochromes"/>
    <property type="match status" value="1"/>
</dbReference>
<dbReference type="PROSITE" id="PS51003">
    <property type="entry name" value="CYTB_CTER"/>
    <property type="match status" value="1"/>
</dbReference>
<dbReference type="PROSITE" id="PS51002">
    <property type="entry name" value="CYTB_NTER"/>
    <property type="match status" value="1"/>
</dbReference>
<feature type="chain" id="PRO_0000061067" description="Cytochrome b">
    <location>
        <begin position="1"/>
        <end position="381"/>
    </location>
</feature>
<feature type="transmembrane region" description="Helical" evidence="2">
    <location>
        <begin position="34"/>
        <end position="54"/>
    </location>
</feature>
<feature type="transmembrane region" description="Helical" evidence="2">
    <location>
        <begin position="78"/>
        <end position="99"/>
    </location>
</feature>
<feature type="transmembrane region" description="Helical" evidence="2">
    <location>
        <begin position="114"/>
        <end position="134"/>
    </location>
</feature>
<feature type="transmembrane region" description="Helical" evidence="2">
    <location>
        <begin position="179"/>
        <end position="199"/>
    </location>
</feature>
<feature type="transmembrane region" description="Helical" evidence="2">
    <location>
        <begin position="227"/>
        <end position="247"/>
    </location>
</feature>
<feature type="transmembrane region" description="Helical" evidence="2">
    <location>
        <begin position="289"/>
        <end position="309"/>
    </location>
</feature>
<feature type="transmembrane region" description="Helical" evidence="2">
    <location>
        <begin position="321"/>
        <end position="341"/>
    </location>
</feature>
<feature type="transmembrane region" description="Helical" evidence="2">
    <location>
        <begin position="348"/>
        <end position="368"/>
    </location>
</feature>
<feature type="binding site" description="axial binding residue" evidence="2">
    <location>
        <position position="84"/>
    </location>
    <ligand>
        <name>heme b</name>
        <dbReference type="ChEBI" id="CHEBI:60344"/>
        <label>b562</label>
    </ligand>
    <ligandPart>
        <name>Fe</name>
        <dbReference type="ChEBI" id="CHEBI:18248"/>
    </ligandPart>
</feature>
<feature type="binding site" description="axial binding residue" evidence="2">
    <location>
        <position position="98"/>
    </location>
    <ligand>
        <name>heme b</name>
        <dbReference type="ChEBI" id="CHEBI:60344"/>
        <label>b566</label>
    </ligand>
    <ligandPart>
        <name>Fe</name>
        <dbReference type="ChEBI" id="CHEBI:18248"/>
    </ligandPart>
</feature>
<feature type="binding site" description="axial binding residue" evidence="2">
    <location>
        <position position="183"/>
    </location>
    <ligand>
        <name>heme b</name>
        <dbReference type="ChEBI" id="CHEBI:60344"/>
        <label>b562</label>
    </ligand>
    <ligandPart>
        <name>Fe</name>
        <dbReference type="ChEBI" id="CHEBI:18248"/>
    </ligandPart>
</feature>
<feature type="binding site" description="axial binding residue" evidence="2">
    <location>
        <position position="197"/>
    </location>
    <ligand>
        <name>heme b</name>
        <dbReference type="ChEBI" id="CHEBI:60344"/>
        <label>b566</label>
    </ligand>
    <ligandPart>
        <name>Fe</name>
        <dbReference type="ChEBI" id="CHEBI:18248"/>
    </ligandPart>
</feature>
<feature type="binding site" evidence="2">
    <location>
        <position position="202"/>
    </location>
    <ligand>
        <name>a ubiquinone</name>
        <dbReference type="ChEBI" id="CHEBI:16389"/>
    </ligand>
</feature>
<geneLocation type="mitochondrion"/>
<evidence type="ECO:0000250" key="1"/>
<evidence type="ECO:0000250" key="2">
    <source>
        <dbReference type="UniProtKB" id="P00157"/>
    </source>
</evidence>
<evidence type="ECO:0000255" key="3">
    <source>
        <dbReference type="PROSITE-ProRule" id="PRU00967"/>
    </source>
</evidence>
<evidence type="ECO:0000255" key="4">
    <source>
        <dbReference type="PROSITE-ProRule" id="PRU00968"/>
    </source>
</evidence>
<accession>P34870</accession>
<organism>
    <name type="scientific">Isurus oxyrinchus</name>
    <name type="common">Shortfin mako shark</name>
    <dbReference type="NCBI Taxonomy" id="57983"/>
    <lineage>
        <taxon>Eukaryota</taxon>
        <taxon>Metazoa</taxon>
        <taxon>Chordata</taxon>
        <taxon>Craniata</taxon>
        <taxon>Vertebrata</taxon>
        <taxon>Chondrichthyes</taxon>
        <taxon>Elasmobranchii</taxon>
        <taxon>Galeomorphii</taxon>
        <taxon>Galeoidea</taxon>
        <taxon>Lamniformes</taxon>
        <taxon>Alopiidae</taxon>
        <taxon>Isurus</taxon>
    </lineage>
</organism>
<sequence length="381" mass="43102">MALNIRKTHPLLKIVNQTLIDLPAPSNISVWWNFGSLLGLCLIIQIVTGLFLAMHYTADISLAFSSVVHICRDVNYGWLIRNIHANGASLFFVCIYFHIARGLYYGSYLYKETWNIGVILLFLLMATAFVGYVLPWGQMSFWGATVITNLLSAFPYVGDVLVQWIWGGFSVDNATLTRFFAFHFLLPFLITALMIIHVLFLHETGSNNPMGLNSDMDKISFHPYFSYKDALGFLTLLILLGVLALFLPNLLGEAENFIPANPLVTPPHIKPEWYFLFAYAILRSIPNKLGGVLALLFSILILMLVPFLHTSKQRSSTFRPLTQIFFWTLVTNMLILTWIGGQPVEQPFILIGQIASISYFSLFLIALPLAGWWENKILNLN</sequence>